<protein>
    <recommendedName>
        <fullName>Neurogenin-1</fullName>
        <shortName>NGN-1</shortName>
    </recommendedName>
    <alternativeName>
        <fullName>Class A basic helix-loop-helix protein 6</fullName>
        <shortName>bHLHa6</shortName>
    </alternativeName>
    <alternativeName>
        <fullName>Neurogenic basic-helix-loop-helix protein</fullName>
    </alternativeName>
    <alternativeName>
        <fullName>Neurogenic differentiation factor 3</fullName>
        <shortName>NeuroD3</shortName>
    </alternativeName>
</protein>
<gene>
    <name type="primary">NEUROG1</name>
    <name type="synonym">BHLHA6</name>
    <name type="synonym">NEUROD3</name>
    <name type="synonym">NGN</name>
    <name type="synonym">NGN1</name>
</gene>
<evidence type="ECO:0000250" key="1">
    <source>
        <dbReference type="UniProtKB" id="P70660"/>
    </source>
</evidence>
<evidence type="ECO:0000255" key="2">
    <source>
        <dbReference type="PROSITE-ProRule" id="PRU00981"/>
    </source>
</evidence>
<evidence type="ECO:0000256" key="3">
    <source>
        <dbReference type="SAM" id="MobiDB-lite"/>
    </source>
</evidence>
<evidence type="ECO:0000269" key="4">
    <source>
    </source>
</evidence>
<evidence type="ECO:0000269" key="5">
    <source>
    </source>
</evidence>
<evidence type="ECO:0000305" key="6"/>
<accession>Q92886</accession>
<accession>Q5U0Q9</accession>
<accession>Q96HE1</accession>
<dbReference type="EMBL" id="U63842">
    <property type="protein sequence ID" value="AAB37575.1"/>
    <property type="molecule type" value="Genomic_DNA"/>
</dbReference>
<dbReference type="EMBL" id="BT019366">
    <property type="protein sequence ID" value="AAV38173.1"/>
    <property type="molecule type" value="mRNA"/>
</dbReference>
<dbReference type="EMBL" id="CH471062">
    <property type="protein sequence ID" value="EAW62214.1"/>
    <property type="molecule type" value="Genomic_DNA"/>
</dbReference>
<dbReference type="EMBL" id="BC008687">
    <property type="protein sequence ID" value="AAH08687.1"/>
    <property type="molecule type" value="mRNA"/>
</dbReference>
<dbReference type="EMBL" id="BC028226">
    <property type="protein sequence ID" value="AAH28226.1"/>
    <property type="molecule type" value="mRNA"/>
</dbReference>
<dbReference type="CCDS" id="CCDS4187.1"/>
<dbReference type="RefSeq" id="NP_006152.2">
    <property type="nucleotide sequence ID" value="NM_006161.2"/>
</dbReference>
<dbReference type="SMR" id="Q92886"/>
<dbReference type="BioGRID" id="110835">
    <property type="interactions" value="16"/>
</dbReference>
<dbReference type="FunCoup" id="Q92886">
    <property type="interactions" value="883"/>
</dbReference>
<dbReference type="IntAct" id="Q92886">
    <property type="interactions" value="16"/>
</dbReference>
<dbReference type="STRING" id="9606.ENSP00000317580"/>
<dbReference type="iPTMnet" id="Q92886"/>
<dbReference type="PhosphoSitePlus" id="Q92886"/>
<dbReference type="BioMuta" id="NEUROG1"/>
<dbReference type="DMDM" id="37538313"/>
<dbReference type="MassIVE" id="Q92886"/>
<dbReference type="PaxDb" id="9606-ENSP00000317580"/>
<dbReference type="PeptideAtlas" id="Q92886"/>
<dbReference type="Antibodypedia" id="26408">
    <property type="antibodies" value="615 antibodies from 35 providers"/>
</dbReference>
<dbReference type="DNASU" id="4762"/>
<dbReference type="Ensembl" id="ENST00000314744.6">
    <property type="protein sequence ID" value="ENSP00000317580.4"/>
    <property type="gene ID" value="ENSG00000181965.6"/>
</dbReference>
<dbReference type="GeneID" id="4762"/>
<dbReference type="KEGG" id="hsa:4762"/>
<dbReference type="MANE-Select" id="ENST00000314744.6">
    <property type="protein sequence ID" value="ENSP00000317580.4"/>
    <property type="RefSeq nucleotide sequence ID" value="NM_006161.3"/>
    <property type="RefSeq protein sequence ID" value="NP_006152.2"/>
</dbReference>
<dbReference type="UCSC" id="uc003lax.3">
    <property type="organism name" value="human"/>
</dbReference>
<dbReference type="AGR" id="HGNC:7764"/>
<dbReference type="CTD" id="4762"/>
<dbReference type="DisGeNET" id="4762"/>
<dbReference type="GeneCards" id="NEUROG1"/>
<dbReference type="HGNC" id="HGNC:7764">
    <property type="gene designation" value="NEUROG1"/>
</dbReference>
<dbReference type="HPA" id="ENSG00000181965">
    <property type="expression patterns" value="Not detected"/>
</dbReference>
<dbReference type="MalaCards" id="NEUROG1"/>
<dbReference type="MIM" id="601726">
    <property type="type" value="gene"/>
</dbReference>
<dbReference type="MIM" id="620469">
    <property type="type" value="phenotype"/>
</dbReference>
<dbReference type="neXtProt" id="NX_Q92886"/>
<dbReference type="OpenTargets" id="ENSG00000181965"/>
<dbReference type="PharmGKB" id="PA31569"/>
<dbReference type="VEuPathDB" id="HostDB:ENSG00000181965"/>
<dbReference type="eggNOG" id="KOG3898">
    <property type="taxonomic scope" value="Eukaryota"/>
</dbReference>
<dbReference type="GeneTree" id="ENSGT00940000162170"/>
<dbReference type="HOGENOM" id="CLU_097959_0_0_1"/>
<dbReference type="InParanoid" id="Q92886"/>
<dbReference type="OMA" id="EDYCYGP"/>
<dbReference type="OrthoDB" id="5969565at2759"/>
<dbReference type="PAN-GO" id="Q92886">
    <property type="GO annotations" value="5 GO annotations based on evolutionary models"/>
</dbReference>
<dbReference type="PhylomeDB" id="Q92886"/>
<dbReference type="TreeFam" id="TF315153"/>
<dbReference type="PathwayCommons" id="Q92886"/>
<dbReference type="SignaLink" id="Q92886"/>
<dbReference type="SIGNOR" id="Q92886"/>
<dbReference type="BioGRID-ORCS" id="4762">
    <property type="hits" value="13 hits in 1158 CRISPR screens"/>
</dbReference>
<dbReference type="GeneWiki" id="NEUROG1"/>
<dbReference type="GenomeRNAi" id="4762"/>
<dbReference type="Pharos" id="Q92886">
    <property type="development level" value="Tbio"/>
</dbReference>
<dbReference type="PRO" id="PR:Q92886"/>
<dbReference type="Proteomes" id="UP000005640">
    <property type="component" value="Chromosome 5"/>
</dbReference>
<dbReference type="RNAct" id="Q92886">
    <property type="molecule type" value="protein"/>
</dbReference>
<dbReference type="Bgee" id="ENSG00000181965">
    <property type="expression patterns" value="Expressed in ganglionic eminence and 3 other cell types or tissues"/>
</dbReference>
<dbReference type="ExpressionAtlas" id="Q92886">
    <property type="expression patterns" value="baseline and differential"/>
</dbReference>
<dbReference type="GO" id="GO:0000785">
    <property type="term" value="C:chromatin"/>
    <property type="evidence" value="ECO:0000247"/>
    <property type="project" value="NTNU_SB"/>
</dbReference>
<dbReference type="GO" id="GO:0005634">
    <property type="term" value="C:nucleus"/>
    <property type="evidence" value="ECO:0000318"/>
    <property type="project" value="GO_Central"/>
</dbReference>
<dbReference type="GO" id="GO:0043204">
    <property type="term" value="C:perikaryon"/>
    <property type="evidence" value="ECO:0007669"/>
    <property type="project" value="Ensembl"/>
</dbReference>
<dbReference type="GO" id="GO:0003682">
    <property type="term" value="F:chromatin binding"/>
    <property type="evidence" value="ECO:0000250"/>
    <property type="project" value="UniProtKB"/>
</dbReference>
<dbReference type="GO" id="GO:0003677">
    <property type="term" value="F:DNA binding"/>
    <property type="evidence" value="ECO:0000269"/>
    <property type="project" value="DisProt"/>
</dbReference>
<dbReference type="GO" id="GO:0003700">
    <property type="term" value="F:DNA-binding transcription factor activity"/>
    <property type="evidence" value="ECO:0000304"/>
    <property type="project" value="ProtInc"/>
</dbReference>
<dbReference type="GO" id="GO:0000981">
    <property type="term" value="F:DNA-binding transcription factor activity, RNA polymerase II-specific"/>
    <property type="evidence" value="ECO:0000247"/>
    <property type="project" value="NTNU_SB"/>
</dbReference>
<dbReference type="GO" id="GO:0070888">
    <property type="term" value="F:E-box binding"/>
    <property type="evidence" value="ECO:0000314"/>
    <property type="project" value="CAFA"/>
</dbReference>
<dbReference type="GO" id="GO:0042803">
    <property type="term" value="F:protein homodimerization activity"/>
    <property type="evidence" value="ECO:0000314"/>
    <property type="project" value="CAFA"/>
</dbReference>
<dbReference type="GO" id="GO:1990837">
    <property type="term" value="F:sequence-specific double-stranded DNA binding"/>
    <property type="evidence" value="ECO:0000314"/>
    <property type="project" value="CAFA"/>
</dbReference>
<dbReference type="GO" id="GO:0031223">
    <property type="term" value="P:auditory behavior"/>
    <property type="evidence" value="ECO:0000316"/>
    <property type="project" value="CAFA"/>
</dbReference>
<dbReference type="GO" id="GO:0061564">
    <property type="term" value="P:axon development"/>
    <property type="evidence" value="ECO:0000318"/>
    <property type="project" value="GO_Central"/>
</dbReference>
<dbReference type="GO" id="GO:0045165">
    <property type="term" value="P:cell fate commitment"/>
    <property type="evidence" value="ECO:0007669"/>
    <property type="project" value="Ensembl"/>
</dbReference>
<dbReference type="GO" id="GO:0090102">
    <property type="term" value="P:cochlea development"/>
    <property type="evidence" value="ECO:0000316"/>
    <property type="project" value="CAFA"/>
</dbReference>
<dbReference type="GO" id="GO:0090103">
    <property type="term" value="P:cochlea morphogenesis"/>
    <property type="evidence" value="ECO:0000316"/>
    <property type="project" value="CAFA"/>
</dbReference>
<dbReference type="GO" id="GO:0097094">
    <property type="term" value="P:craniofacial suture morphogenesis"/>
    <property type="evidence" value="ECO:0000316"/>
    <property type="project" value="CAFA"/>
</dbReference>
<dbReference type="GO" id="GO:0010458">
    <property type="term" value="P:exit from mitosis"/>
    <property type="evidence" value="ECO:0007669"/>
    <property type="project" value="Ensembl"/>
</dbReference>
<dbReference type="GO" id="GO:0030900">
    <property type="term" value="P:forebrain development"/>
    <property type="evidence" value="ECO:0000318"/>
    <property type="project" value="GO_Central"/>
</dbReference>
<dbReference type="GO" id="GO:0048806">
    <property type="term" value="P:genitalia development"/>
    <property type="evidence" value="ECO:0000316"/>
    <property type="project" value="CAFA"/>
</dbReference>
<dbReference type="GO" id="GO:0035112">
    <property type="term" value="P:genitalia morphogenesis"/>
    <property type="evidence" value="ECO:0000316"/>
    <property type="project" value="CAFA"/>
</dbReference>
<dbReference type="GO" id="GO:1905748">
    <property type="term" value="P:hard palate morphogenesis"/>
    <property type="evidence" value="ECO:0000316"/>
    <property type="project" value="CAFA"/>
</dbReference>
<dbReference type="GO" id="GO:0048839">
    <property type="term" value="P:inner ear development"/>
    <property type="evidence" value="ECO:0000316"/>
    <property type="project" value="CAFA"/>
</dbReference>
<dbReference type="GO" id="GO:0042472">
    <property type="term" value="P:inner ear morphogenesis"/>
    <property type="evidence" value="ECO:0000316"/>
    <property type="project" value="CAFA"/>
</dbReference>
<dbReference type="GO" id="GO:0098583">
    <property type="term" value="P:learned vocalization behavior"/>
    <property type="evidence" value="ECO:0000316"/>
    <property type="project" value="CAFA"/>
</dbReference>
<dbReference type="GO" id="GO:0071626">
    <property type="term" value="P:mastication"/>
    <property type="evidence" value="ECO:0000316"/>
    <property type="project" value="CAFA"/>
</dbReference>
<dbReference type="GO" id="GO:1901078">
    <property type="term" value="P:negative regulation of relaxation of muscle"/>
    <property type="evidence" value="ECO:0000316"/>
    <property type="project" value="CAFA"/>
</dbReference>
<dbReference type="GO" id="GO:1905747">
    <property type="term" value="P:negative regulation of saliva secretion"/>
    <property type="evidence" value="ECO:0000316"/>
    <property type="project" value="CAFA"/>
</dbReference>
<dbReference type="GO" id="GO:0007399">
    <property type="term" value="P:nervous system development"/>
    <property type="evidence" value="ECO:0000304"/>
    <property type="project" value="ProtInc"/>
</dbReference>
<dbReference type="GO" id="GO:0050885">
    <property type="term" value="P:neuromuscular process controlling balance"/>
    <property type="evidence" value="ECO:0000316"/>
    <property type="project" value="CAFA"/>
</dbReference>
<dbReference type="GO" id="GO:0030432">
    <property type="term" value="P:peristalsis"/>
    <property type="evidence" value="ECO:0000316"/>
    <property type="project" value="CAFA"/>
</dbReference>
<dbReference type="GO" id="GO:0051091">
    <property type="term" value="P:positive regulation of DNA-binding transcription factor activity"/>
    <property type="evidence" value="ECO:0000250"/>
    <property type="project" value="UniProtKB"/>
</dbReference>
<dbReference type="GO" id="GO:0031536">
    <property type="term" value="P:positive regulation of exit from mitosis"/>
    <property type="evidence" value="ECO:0007669"/>
    <property type="project" value="Ensembl"/>
</dbReference>
<dbReference type="GO" id="GO:0045666">
    <property type="term" value="P:positive regulation of neuron differentiation"/>
    <property type="evidence" value="ECO:0000250"/>
    <property type="project" value="UniProtKB"/>
</dbReference>
<dbReference type="GO" id="GO:0045944">
    <property type="term" value="P:positive regulation of transcription by RNA polymerase II"/>
    <property type="evidence" value="ECO:0000250"/>
    <property type="project" value="UniProtKB"/>
</dbReference>
<dbReference type="GO" id="GO:0048634">
    <property type="term" value="P:regulation of muscle organ development"/>
    <property type="evidence" value="ECO:0000316"/>
    <property type="project" value="CAFA"/>
</dbReference>
<dbReference type="GO" id="GO:0006357">
    <property type="term" value="P:regulation of transcription by RNA polymerase II"/>
    <property type="evidence" value="ECO:0000304"/>
    <property type="project" value="ProtInc"/>
</dbReference>
<dbReference type="GO" id="GO:0007423">
    <property type="term" value="P:sensory organ development"/>
    <property type="evidence" value="ECO:0000318"/>
    <property type="project" value="GO_Central"/>
</dbReference>
<dbReference type="GO" id="GO:0007356">
    <property type="term" value="P:thorax and anterior abdomen determination"/>
    <property type="evidence" value="ECO:0000316"/>
    <property type="project" value="CAFA"/>
</dbReference>
<dbReference type="GO" id="GO:0021559">
    <property type="term" value="P:trigeminal nerve development"/>
    <property type="evidence" value="ECO:0000316"/>
    <property type="project" value="CAFA"/>
</dbReference>
<dbReference type="GO" id="GO:0021650">
    <property type="term" value="P:vestibulocochlear nerve formation"/>
    <property type="evidence" value="ECO:0000316"/>
    <property type="project" value="CAFA"/>
</dbReference>
<dbReference type="CDD" id="cd19716">
    <property type="entry name" value="bHLH_TS_NGN1_NeuroD3"/>
    <property type="match status" value="1"/>
</dbReference>
<dbReference type="DisProt" id="DP00672"/>
<dbReference type="FunFam" id="4.10.280.10:FF:000006">
    <property type="entry name" value="Neurogenic differentiation factor"/>
    <property type="match status" value="1"/>
</dbReference>
<dbReference type="Gene3D" id="4.10.280.10">
    <property type="entry name" value="Helix-loop-helix DNA-binding domain"/>
    <property type="match status" value="1"/>
</dbReference>
<dbReference type="InterPro" id="IPR011598">
    <property type="entry name" value="bHLH_dom"/>
</dbReference>
<dbReference type="InterPro" id="IPR050359">
    <property type="entry name" value="bHLH_transcription_factors"/>
</dbReference>
<dbReference type="InterPro" id="IPR036638">
    <property type="entry name" value="HLH_DNA-bd_sf"/>
</dbReference>
<dbReference type="PANTHER" id="PTHR19290">
    <property type="entry name" value="BASIC HELIX-LOOP-HELIX PROTEIN NEUROGENIN-RELATED"/>
    <property type="match status" value="1"/>
</dbReference>
<dbReference type="PANTHER" id="PTHR19290:SF130">
    <property type="entry name" value="NEUROGENIN-1"/>
    <property type="match status" value="1"/>
</dbReference>
<dbReference type="Pfam" id="PF00010">
    <property type="entry name" value="HLH"/>
    <property type="match status" value="1"/>
</dbReference>
<dbReference type="SMART" id="SM00353">
    <property type="entry name" value="HLH"/>
    <property type="match status" value="1"/>
</dbReference>
<dbReference type="SUPFAM" id="SSF47459">
    <property type="entry name" value="HLH, helix-loop-helix DNA-binding domain"/>
    <property type="match status" value="1"/>
</dbReference>
<dbReference type="PROSITE" id="PS50888">
    <property type="entry name" value="BHLH"/>
    <property type="match status" value="1"/>
</dbReference>
<organism>
    <name type="scientific">Homo sapiens</name>
    <name type="common">Human</name>
    <dbReference type="NCBI Taxonomy" id="9606"/>
    <lineage>
        <taxon>Eukaryota</taxon>
        <taxon>Metazoa</taxon>
        <taxon>Chordata</taxon>
        <taxon>Craniata</taxon>
        <taxon>Vertebrata</taxon>
        <taxon>Euteleostomi</taxon>
        <taxon>Mammalia</taxon>
        <taxon>Eutheria</taxon>
        <taxon>Euarchontoglires</taxon>
        <taxon>Primates</taxon>
        <taxon>Haplorrhini</taxon>
        <taxon>Catarrhini</taxon>
        <taxon>Hominidae</taxon>
        <taxon>Homo</taxon>
    </lineage>
</organism>
<comment type="function">
    <text evidence="1">Acts as a transcriptional regulator. Involved in the initiation of neuronal differentiation. Activates transcription by binding to the E box (5'-CANNTG-3'). Associates with chromatin to enhancer regulatory elements in genes encoding key transcriptional regulators of neurogenesis (By similarity).</text>
</comment>
<comment type="subunit">
    <text>Efficient DNA binding requires dimerization with another bHLH protein.</text>
</comment>
<comment type="interaction">
    <interactant intactId="EBI-10279647">
        <id>Q92886</id>
    </interactant>
    <interactant intactId="EBI-6875961">
        <id>P02489</id>
        <label>CRYAA</label>
    </interactant>
    <organismsDiffer>false</organismsDiffer>
    <experiments>3</experiments>
</comment>
<comment type="interaction">
    <interactant intactId="EBI-10279647">
        <id>Q92886</id>
    </interactant>
    <interactant intactId="EBI-356015">
        <id>Q14204</id>
        <label>DYNC1H1</label>
    </interactant>
    <organismsDiffer>false</organismsDiffer>
    <experiments>3</experiments>
</comment>
<comment type="interaction">
    <interactant intactId="EBI-10279647">
        <id>Q92886</id>
    </interactant>
    <interactant intactId="EBI-2432309">
        <id>Q92876</id>
        <label>KLK6</label>
    </interactant>
    <organismsDiffer>false</organismsDiffer>
    <experiments>3</experiments>
</comment>
<comment type="interaction">
    <interactant intactId="EBI-10279647">
        <id>Q92886</id>
    </interactant>
    <interactant intactId="EBI-11952764">
        <id>Q99081-3</id>
        <label>TCF12</label>
    </interactant>
    <organismsDiffer>false</organismsDiffer>
    <experiments>3</experiments>
</comment>
<comment type="interaction">
    <interactant intactId="EBI-10279647">
        <id>Q92886</id>
    </interactant>
    <interactant intactId="EBI-533224">
        <id>P15884</id>
        <label>TCF4</label>
    </interactant>
    <organismsDiffer>false</organismsDiffer>
    <experiments>4</experiments>
</comment>
<comment type="subcellular location">
    <subcellularLocation>
        <location evidence="6">Nucleus</location>
    </subcellularLocation>
</comment>
<comment type="tissue specificity">
    <text>Expression restricted to the embryonic nervous system.</text>
</comment>
<comment type="disease" evidence="4 5">
    <disease id="DI-06742">
        <name>Cranial dysinnervation disorder, congenital, with absent corneal reflex and developmental delay</name>
        <acronym>CCDDRD</acronym>
        <description>An autosomal recessive form of congenital cranial dysinnervation disorder. This term defines a heterogeneous group of neurodevelopmental disorders caused by a primary disturbance of innervation due to deficient, absent, or misguided cranial nerves. CCDDRD is characterized by developmental delay, corneal opacity, absent corneal reflex, expressionless face with asymmetry, sensorineural hearing loss, trigeminal nerve hypoplasia, and bilateral agenesis or severe hypoplasia of the VIII nerve with marked atresia of the internal auditory canals and cochlear labyrinth malformation. Additional features include hypotonia, impaired intellectual development, and behavioral abnormalities.</description>
        <dbReference type="MIM" id="620469"/>
    </disease>
    <text>The disease may be caused by variants affecting the gene represented in this entry.</text>
</comment>
<sequence length="237" mass="25718">MPARLETCISDLDCASSSGSDLSGFLTDEEDCARLQQAASASGPPAPARRGAPNISRASEVPGAQDDEQERRRRRGRTRVRSEALLHSLRRSRRVKANDRERNRMHNLNAALDALRSVLPSFPDDTKLTKIETLRFAYNYIWALAETLRLADQGLPGGGARERLLPPQCVPCLPGPPSPASDAESWGSGAAAASPLSDPSSPAASEDFTYRPGDPVFSFPSLPKDLLHTTPCFIPYH</sequence>
<proteinExistence type="evidence at protein level"/>
<reference key="1">
    <citation type="journal article" date="1996" name="Mol. Cell. Biol.">
        <title>NeuroD2 and neuroD3: distinct expression patterns and transcriptional activation potentials within the neuroD gene family.</title>
        <authorList>
            <person name="McCormick M.B."/>
            <person name="Tamimi R.M."/>
            <person name="Snider L."/>
            <person name="Asakura A."/>
            <person name="Bergstrom D."/>
            <person name="Tapscott S.J."/>
        </authorList>
    </citation>
    <scope>NUCLEOTIDE SEQUENCE [GENOMIC DNA]</scope>
</reference>
<reference key="2">
    <citation type="submission" date="2004-10" db="EMBL/GenBank/DDBJ databases">
        <title>Cloning of human full-length CDSs in BD Creator(TM) system donor vector.</title>
        <authorList>
            <person name="Kalnine N."/>
            <person name="Chen X."/>
            <person name="Rolfs A."/>
            <person name="Halleck A."/>
            <person name="Hines L."/>
            <person name="Eisenstein S."/>
            <person name="Koundinya M."/>
            <person name="Raphael J."/>
            <person name="Moreira D."/>
            <person name="Kelley T."/>
            <person name="LaBaer J."/>
            <person name="Lin Y."/>
            <person name="Phelan M."/>
            <person name="Farmer A."/>
        </authorList>
    </citation>
    <scope>NUCLEOTIDE SEQUENCE [LARGE SCALE MRNA]</scope>
</reference>
<reference key="3">
    <citation type="submission" date="2005-09" db="EMBL/GenBank/DDBJ databases">
        <authorList>
            <person name="Mural R.J."/>
            <person name="Istrail S."/>
            <person name="Sutton G.G."/>
            <person name="Florea L."/>
            <person name="Halpern A.L."/>
            <person name="Mobarry C.M."/>
            <person name="Lippert R."/>
            <person name="Walenz B."/>
            <person name="Shatkay H."/>
            <person name="Dew I."/>
            <person name="Miller J.R."/>
            <person name="Flanigan M.J."/>
            <person name="Edwards N.J."/>
            <person name="Bolanos R."/>
            <person name="Fasulo D."/>
            <person name="Halldorsson B.V."/>
            <person name="Hannenhalli S."/>
            <person name="Turner R."/>
            <person name="Yooseph S."/>
            <person name="Lu F."/>
            <person name="Nusskern D.R."/>
            <person name="Shue B.C."/>
            <person name="Zheng X.H."/>
            <person name="Zhong F."/>
            <person name="Delcher A.L."/>
            <person name="Huson D.H."/>
            <person name="Kravitz S.A."/>
            <person name="Mouchard L."/>
            <person name="Reinert K."/>
            <person name="Remington K.A."/>
            <person name="Clark A.G."/>
            <person name="Waterman M.S."/>
            <person name="Eichler E.E."/>
            <person name="Adams M.D."/>
            <person name="Hunkapiller M.W."/>
            <person name="Myers E.W."/>
            <person name="Venter J.C."/>
        </authorList>
    </citation>
    <scope>NUCLEOTIDE SEQUENCE [LARGE SCALE GENOMIC DNA]</scope>
</reference>
<reference key="4">
    <citation type="journal article" date="2004" name="Genome Res.">
        <title>The status, quality, and expansion of the NIH full-length cDNA project: the Mammalian Gene Collection (MGC).</title>
        <authorList>
            <consortium name="The MGC Project Team"/>
        </authorList>
    </citation>
    <scope>NUCLEOTIDE SEQUENCE [LARGE SCALE MRNA]</scope>
    <source>
        <tissue>Brain</tissue>
        <tissue>Eye</tissue>
    </source>
</reference>
<reference key="5">
    <citation type="journal article" date="2015" name="Hum. Genet.">
        <title>High diagnostic yield of clinical exome sequencing in Middle Eastern patients with Mendelian disorders.</title>
        <authorList>
            <person name="Yavarna T."/>
            <person name="Al-Dewik N."/>
            <person name="Al-Mureikhi M."/>
            <person name="Ali R."/>
            <person name="Al-Mesaifri F."/>
            <person name="Mahmoud L."/>
            <person name="Shahbeck N."/>
            <person name="Lakhani S."/>
            <person name="AlMulla M."/>
            <person name="Nawaz Z."/>
            <person name="Vitazka P."/>
            <person name="Alkuraya F.S."/>
            <person name="Ben-Omran T."/>
        </authorList>
    </citation>
    <scope>VARIANT CCDDRD LEU-116</scope>
    <scope>INVOLVEMENT IN CCDDRD</scope>
</reference>
<reference key="6">
    <citation type="journal article" date="2021" name="Clin. Genet.">
        <title>Adding evidence to the role of NEUROG1 in congenital cranial dysinnervation disorders.</title>
        <authorList>
            <person name="Dupont J."/>
            <person name="Vieira J.P."/>
            <person name="Tavares A.L.T."/>
            <person name="Conceicao C.R."/>
            <person name="Khan S."/>
            <person name="Bertoli-Avella A.M."/>
            <person name="Sousa A.B."/>
        </authorList>
    </citation>
    <scope>VARIANT CCDDRD 68-GLU--HIS-237 DEL</scope>
    <scope>INVOLVEMENT IN CCDDRD</scope>
</reference>
<name>NGN1_HUMAN</name>
<feature type="chain" id="PRO_0000127396" description="Neurogenin-1">
    <location>
        <begin position="1"/>
        <end position="237"/>
    </location>
</feature>
<feature type="domain" description="bHLH" evidence="2">
    <location>
        <begin position="92"/>
        <end position="144"/>
    </location>
</feature>
<feature type="region of interest" description="Disordered" evidence="3">
    <location>
        <begin position="35"/>
        <end position="83"/>
    </location>
</feature>
<feature type="region of interest" description="Disordered" evidence="3">
    <location>
        <begin position="175"/>
        <end position="209"/>
    </location>
</feature>
<feature type="compositionally biased region" description="Low complexity" evidence="3">
    <location>
        <begin position="38"/>
        <end position="53"/>
    </location>
</feature>
<feature type="compositionally biased region" description="Low complexity" evidence="3">
    <location>
        <begin position="180"/>
        <end position="207"/>
    </location>
</feature>
<feature type="sequence variant" id="VAR_088842" description="In CCDDRD; likely pathogenic." evidence="5">
    <location>
        <begin position="68"/>
        <end position="237"/>
    </location>
</feature>
<feature type="sequence variant" id="VAR_088843" description="In CCDDRD; uncertain significance." evidence="4">
    <original>R</original>
    <variation>L</variation>
    <location>
        <position position="116"/>
    </location>
</feature>
<feature type="sequence conflict" description="In Ref. 1; AAB37575." evidence="6" ref="1">
    <original>G</original>
    <variation>S</variation>
    <location>
        <position position="51"/>
    </location>
</feature>
<keyword id="KW-0010">Activator</keyword>
<keyword id="KW-0209">Deafness</keyword>
<keyword id="KW-0217">Developmental protein</keyword>
<keyword id="KW-0221">Differentiation</keyword>
<keyword id="KW-0225">Disease variant</keyword>
<keyword id="KW-0238">DNA-binding</keyword>
<keyword id="KW-0991">Intellectual disability</keyword>
<keyword id="KW-0524">Neurogenesis</keyword>
<keyword id="KW-0539">Nucleus</keyword>
<keyword id="KW-1267">Proteomics identification</keyword>
<keyword id="KW-1185">Reference proteome</keyword>
<keyword id="KW-0804">Transcription</keyword>
<keyword id="KW-0805">Transcription regulation</keyword>